<keyword id="KW-0153">Cholesterol metabolism</keyword>
<keyword id="KW-0349">Heme</keyword>
<keyword id="KW-0408">Iron</keyword>
<keyword id="KW-0443">Lipid metabolism</keyword>
<keyword id="KW-0472">Membrane</keyword>
<keyword id="KW-0479">Metal-binding</keyword>
<keyword id="KW-0496">Mitochondrion</keyword>
<keyword id="KW-0999">Mitochondrion inner membrane</keyword>
<keyword id="KW-0503">Monooxygenase</keyword>
<keyword id="KW-0560">Oxidoreductase</keyword>
<keyword id="KW-1185">Reference proteome</keyword>
<keyword id="KW-0753">Steroid metabolism</keyword>
<keyword id="KW-0755">Steroidogenesis</keyword>
<keyword id="KW-1207">Sterol metabolism</keyword>
<keyword id="KW-0809">Transit peptide</keyword>
<evidence type="ECO:0000250" key="1">
    <source>
        <dbReference type="UniProtKB" id="P00189"/>
    </source>
</evidence>
<evidence type="ECO:0000250" key="2">
    <source>
        <dbReference type="UniProtKB" id="P05108"/>
    </source>
</evidence>
<evidence type="ECO:0000250" key="3">
    <source>
        <dbReference type="UniProtKB" id="P14137"/>
    </source>
</evidence>
<evidence type="ECO:0000305" key="4"/>
<gene>
    <name type="primary">CYP11A1</name>
    <name type="synonym">CYP11A</name>
</gene>
<comment type="function">
    <text evidence="2">A cytochrome P450 monooxygenase that catalyzes the side-chain hydroxylation and cleavage of cholesterol to pregnenolone, the precursor of most steroid hormones. Catalyzes three sequential oxidation reactions of cholesterol, namely the hydroxylation at C22 followed with the hydroxylation at C20 to yield 20R,22R-hydroxycholesterol that is further cleaved between C20 and C22 to yield the C21-steroid pregnenolone and 4-methylpentanal. Mechanistically, uses molecular oxygen inserting one oxygen atom into a substrate and reducing the second into a water molecule. Two electrons are provided by NADPH via a two-protein mitochondrial transfer system comprising flavoprotein FDXR (adrenodoxin/ferredoxin reductase) and nonheme iron-sulfur protein FDX1 or FDX2 (adrenodoxin/ferredoxin).</text>
</comment>
<comment type="catalytic activity">
    <reaction evidence="2">
        <text>6 reduced [adrenodoxin] + cholesterol + 3 O2 + 6 H(+) = 4-methylpentanal + pregnenolone + 6 oxidized [adrenodoxin] + 4 H2O</text>
        <dbReference type="Rhea" id="RHEA:35739"/>
        <dbReference type="Rhea" id="RHEA-COMP:9998"/>
        <dbReference type="Rhea" id="RHEA-COMP:9999"/>
        <dbReference type="ChEBI" id="CHEBI:15377"/>
        <dbReference type="ChEBI" id="CHEBI:15378"/>
        <dbReference type="ChEBI" id="CHEBI:15379"/>
        <dbReference type="ChEBI" id="CHEBI:16113"/>
        <dbReference type="ChEBI" id="CHEBI:16581"/>
        <dbReference type="ChEBI" id="CHEBI:17998"/>
        <dbReference type="ChEBI" id="CHEBI:33737"/>
        <dbReference type="ChEBI" id="CHEBI:33738"/>
        <dbReference type="EC" id="1.14.15.6"/>
    </reaction>
    <physiologicalReaction direction="left-to-right" evidence="2">
        <dbReference type="Rhea" id="RHEA:35740"/>
    </physiologicalReaction>
</comment>
<comment type="catalytic activity">
    <reaction evidence="2">
        <text>2 reduced [adrenodoxin] + cholesterol + O2 + 2 H(+) = (22R)-hydroxycholesterol + 2 oxidized [adrenodoxin] + H2O</text>
        <dbReference type="Rhea" id="RHEA:34335"/>
        <dbReference type="Rhea" id="RHEA-COMP:9998"/>
        <dbReference type="Rhea" id="RHEA-COMP:9999"/>
        <dbReference type="ChEBI" id="CHEBI:15377"/>
        <dbReference type="ChEBI" id="CHEBI:15378"/>
        <dbReference type="ChEBI" id="CHEBI:15379"/>
        <dbReference type="ChEBI" id="CHEBI:16113"/>
        <dbReference type="ChEBI" id="CHEBI:33737"/>
        <dbReference type="ChEBI" id="CHEBI:33738"/>
        <dbReference type="ChEBI" id="CHEBI:67237"/>
    </reaction>
    <physiologicalReaction direction="left-to-right" evidence="2">
        <dbReference type="Rhea" id="RHEA:34336"/>
    </physiologicalReaction>
</comment>
<comment type="catalytic activity">
    <reaction evidence="2">
        <text>(22R)-hydroxycholesterol + 2 reduced [adrenodoxin] + O2 + 2 H(+) = (20R,22R)-20,22-dihydroxycholesterol + 2 oxidized [adrenodoxin] + H2O</text>
        <dbReference type="Rhea" id="RHEA:34339"/>
        <dbReference type="Rhea" id="RHEA-COMP:9998"/>
        <dbReference type="Rhea" id="RHEA-COMP:9999"/>
        <dbReference type="ChEBI" id="CHEBI:1294"/>
        <dbReference type="ChEBI" id="CHEBI:15377"/>
        <dbReference type="ChEBI" id="CHEBI:15378"/>
        <dbReference type="ChEBI" id="CHEBI:15379"/>
        <dbReference type="ChEBI" id="CHEBI:33737"/>
        <dbReference type="ChEBI" id="CHEBI:33738"/>
        <dbReference type="ChEBI" id="CHEBI:67237"/>
    </reaction>
    <physiologicalReaction direction="left-to-right" evidence="2">
        <dbReference type="Rhea" id="RHEA:34340"/>
    </physiologicalReaction>
</comment>
<comment type="catalytic activity">
    <reaction evidence="2">
        <text>(20R,22R)-20,22-dihydroxycholesterol + 2 reduced [adrenodoxin] + O2 + 2 H(+) = 4-methylpentanal + pregnenolone + 2 oxidized [adrenodoxin] + 2 H2O</text>
        <dbReference type="Rhea" id="RHEA:34343"/>
        <dbReference type="Rhea" id="RHEA-COMP:9998"/>
        <dbReference type="Rhea" id="RHEA-COMP:9999"/>
        <dbReference type="ChEBI" id="CHEBI:1294"/>
        <dbReference type="ChEBI" id="CHEBI:15377"/>
        <dbReference type="ChEBI" id="CHEBI:15378"/>
        <dbReference type="ChEBI" id="CHEBI:15379"/>
        <dbReference type="ChEBI" id="CHEBI:16581"/>
        <dbReference type="ChEBI" id="CHEBI:17998"/>
        <dbReference type="ChEBI" id="CHEBI:33737"/>
        <dbReference type="ChEBI" id="CHEBI:33738"/>
    </reaction>
    <physiologicalReaction direction="left-to-right" evidence="2">
        <dbReference type="Rhea" id="RHEA:34344"/>
    </physiologicalReaction>
</comment>
<comment type="cofactor">
    <cofactor evidence="2">
        <name>heme</name>
        <dbReference type="ChEBI" id="CHEBI:30413"/>
    </cofactor>
</comment>
<comment type="pathway">
    <text evidence="2">Lipid metabolism; C21-steroid hormone metabolism.</text>
</comment>
<comment type="pathway">
    <text evidence="2">Steroid metabolism; cholesterol metabolism.</text>
</comment>
<comment type="subunit">
    <text evidence="2">Interacts with FDX1/adrenodoxin.</text>
</comment>
<comment type="subcellular location">
    <subcellularLocation>
        <location evidence="3">Mitochondrion inner membrane</location>
        <topology evidence="4">Peripheral membrane protein</topology>
    </subcellularLocation>
    <text evidence="3">Localizes to the matrix side of the mitochondrion inner membrane.</text>
</comment>
<comment type="similarity">
    <text evidence="4">Belongs to the cytochrome P450 family.</text>
</comment>
<accession>Q9EPT4</accession>
<reference key="1">
    <citation type="journal article" date="2002" name="Gen. Comp. Endocrinol.">
        <title>The cDNA cloning and tissue expression of the cytochrome P450scc from Syrian hamster (Mesocricetus auratus).</title>
        <authorList>
            <person name="Vilchis F."/>
            <person name="Chavez B."/>
            <person name="Larrea F."/>
            <person name="Timossi C."/>
            <person name="Montiel F."/>
        </authorList>
    </citation>
    <scope>NUCLEOTIDE SEQUENCE [MRNA]</scope>
</reference>
<protein>
    <recommendedName>
        <fullName evidence="2">Cholesterol side-chain cleavage enzyme, mitochondrial</fullName>
        <ecNumber evidence="2">1.14.15.6</ecNumber>
    </recommendedName>
    <alternativeName>
        <fullName>CYPXIA1</fullName>
    </alternativeName>
    <alternativeName>
        <fullName>Cholesterol desmolase</fullName>
    </alternativeName>
    <alternativeName>
        <fullName>Cytochrome P450 11A1</fullName>
    </alternativeName>
    <alternativeName>
        <fullName>Cytochrome P450(scc)</fullName>
    </alternativeName>
</protein>
<dbReference type="EC" id="1.14.15.6" evidence="2"/>
<dbReference type="EMBL" id="AF323965">
    <property type="protein sequence ID" value="AAG42320.1"/>
    <property type="molecule type" value="mRNA"/>
</dbReference>
<dbReference type="RefSeq" id="NP_001268569.1">
    <property type="nucleotide sequence ID" value="NM_001281640.1"/>
</dbReference>
<dbReference type="SMR" id="Q9EPT4"/>
<dbReference type="STRING" id="10036.ENSMAUP00000011954"/>
<dbReference type="Ensembl" id="ENSMAUT00000015855">
    <property type="protein sequence ID" value="ENSMAUP00000011954"/>
    <property type="gene ID" value="ENSMAUG00000012399"/>
</dbReference>
<dbReference type="GeneID" id="101827747"/>
<dbReference type="KEGG" id="maua:101827747"/>
<dbReference type="eggNOG" id="KOG0159">
    <property type="taxonomic scope" value="Eukaryota"/>
</dbReference>
<dbReference type="OrthoDB" id="3945418at2759"/>
<dbReference type="BRENDA" id="1.14.15.6">
    <property type="organism ID" value="3239"/>
</dbReference>
<dbReference type="UniPathway" id="UPA00229"/>
<dbReference type="UniPathway" id="UPA00296"/>
<dbReference type="Proteomes" id="UP000189706">
    <property type="component" value="Unplaced"/>
</dbReference>
<dbReference type="GO" id="GO:0005743">
    <property type="term" value="C:mitochondrial inner membrane"/>
    <property type="evidence" value="ECO:0000250"/>
    <property type="project" value="UniProtKB"/>
</dbReference>
<dbReference type="GO" id="GO:0008386">
    <property type="term" value="F:cholesterol monooxygenase (side-chain-cleaving) activity"/>
    <property type="evidence" value="ECO:0000250"/>
    <property type="project" value="UniProtKB"/>
</dbReference>
<dbReference type="GO" id="GO:0020037">
    <property type="term" value="F:heme binding"/>
    <property type="evidence" value="ECO:0000250"/>
    <property type="project" value="UniProtKB"/>
</dbReference>
<dbReference type="GO" id="GO:0005506">
    <property type="term" value="F:iron ion binding"/>
    <property type="evidence" value="ECO:0007669"/>
    <property type="project" value="InterPro"/>
</dbReference>
<dbReference type="GO" id="GO:0006700">
    <property type="term" value="P:C21-steroid hormone biosynthetic process"/>
    <property type="evidence" value="ECO:0000250"/>
    <property type="project" value="UniProtKB"/>
</dbReference>
<dbReference type="GO" id="GO:0071375">
    <property type="term" value="P:cellular response to peptide hormone stimulus"/>
    <property type="evidence" value="ECO:0007669"/>
    <property type="project" value="TreeGrafter"/>
</dbReference>
<dbReference type="GO" id="GO:0008203">
    <property type="term" value="P:cholesterol metabolic process"/>
    <property type="evidence" value="ECO:0000250"/>
    <property type="project" value="UniProtKB"/>
</dbReference>
<dbReference type="GO" id="GO:0034650">
    <property type="term" value="P:cortisol metabolic process"/>
    <property type="evidence" value="ECO:0007669"/>
    <property type="project" value="TreeGrafter"/>
</dbReference>
<dbReference type="GO" id="GO:0006704">
    <property type="term" value="P:glucocorticoid biosynthetic process"/>
    <property type="evidence" value="ECO:0007669"/>
    <property type="project" value="TreeGrafter"/>
</dbReference>
<dbReference type="FunFam" id="1.10.630.10:FF:000015">
    <property type="entry name" value="Cholesterol side-chain cleavage enzyme, mitochondrial"/>
    <property type="match status" value="1"/>
</dbReference>
<dbReference type="Gene3D" id="1.10.630.10">
    <property type="entry name" value="Cytochrome P450"/>
    <property type="match status" value="1"/>
</dbReference>
<dbReference type="InterPro" id="IPR050479">
    <property type="entry name" value="CYP11_CYP27_families"/>
</dbReference>
<dbReference type="InterPro" id="IPR001128">
    <property type="entry name" value="Cyt_P450"/>
</dbReference>
<dbReference type="InterPro" id="IPR017972">
    <property type="entry name" value="Cyt_P450_CS"/>
</dbReference>
<dbReference type="InterPro" id="IPR002401">
    <property type="entry name" value="Cyt_P450_E_grp-I"/>
</dbReference>
<dbReference type="InterPro" id="IPR036396">
    <property type="entry name" value="Cyt_P450_sf"/>
</dbReference>
<dbReference type="PANTHER" id="PTHR24279:SF3">
    <property type="entry name" value="CHOLESTEROL SIDE-CHAIN CLEAVAGE ENZYME, MITOCHONDRIAL"/>
    <property type="match status" value="1"/>
</dbReference>
<dbReference type="PANTHER" id="PTHR24279">
    <property type="entry name" value="CYTOCHROME P450"/>
    <property type="match status" value="1"/>
</dbReference>
<dbReference type="Pfam" id="PF00067">
    <property type="entry name" value="p450"/>
    <property type="match status" value="1"/>
</dbReference>
<dbReference type="PRINTS" id="PR00463">
    <property type="entry name" value="EP450I"/>
</dbReference>
<dbReference type="PRINTS" id="PR00385">
    <property type="entry name" value="P450"/>
</dbReference>
<dbReference type="SUPFAM" id="SSF48264">
    <property type="entry name" value="Cytochrome P450"/>
    <property type="match status" value="1"/>
</dbReference>
<dbReference type="PROSITE" id="PS00086">
    <property type="entry name" value="CYTOCHROME_P450"/>
    <property type="match status" value="1"/>
</dbReference>
<name>CP11A_MESAU</name>
<organism>
    <name type="scientific">Mesocricetus auratus</name>
    <name type="common">Golden hamster</name>
    <dbReference type="NCBI Taxonomy" id="10036"/>
    <lineage>
        <taxon>Eukaryota</taxon>
        <taxon>Metazoa</taxon>
        <taxon>Chordata</taxon>
        <taxon>Craniata</taxon>
        <taxon>Vertebrata</taxon>
        <taxon>Euteleostomi</taxon>
        <taxon>Mammalia</taxon>
        <taxon>Eutheria</taxon>
        <taxon>Euarchontoglires</taxon>
        <taxon>Glires</taxon>
        <taxon>Rodentia</taxon>
        <taxon>Myomorpha</taxon>
        <taxon>Muroidea</taxon>
        <taxon>Cricetidae</taxon>
        <taxon>Cricetinae</taxon>
        <taxon>Mesocricetus</taxon>
    </lineage>
</organism>
<proteinExistence type="evidence at transcript level"/>
<sequence length="520" mass="60271">MLAKGLSLRSVLAKGCQPFLSPTWQSSVLATGGGANISTNSPRPFNEIPSPGDNGWLNLYHFWRENGTHRIHYHHMQNFQKYGPIYREKLGNKDSVYILDPEDAAQLFLSEGPYPERYLVPPWVAYHQYYKRPIGVLFKSSEAWKKDRLVLNQEVMAPEAIKNFVPLLEGVVQDFINVLHRRIKQQKSGNFSGDISDDLFRFAFESITSVVFGERLGMLEEIVDPESQRFIDAIYQMFHTSVPMLNLPPELFRFFRTKTWKEHAAAWDMIFKKADDYTQTFYWDLRQKQEFSKYPGVLYSLLGGNKLPFKNIQANITEMLAGGVDTTSMTLQWSLYEMAHNLKVQEMLRAEVLAARRQAQGDMVKMVQLVPLLKASIKETLRLHPISVTVQRYLVDDLVLRNYRIPAKMLVQVANYAMGREPSFFPNPNKFDPTRWLEKSKNTTHFRYLSFGWGVRQCLGRRIAELEMTIFLINVLENFRIELQSLHDVGTKFNLILMPEKPILFNLQPLKKDLGTTTNR</sequence>
<feature type="transit peptide" description="Mitochondrion" evidence="1">
    <location>
        <begin position="1"/>
        <end position="36"/>
    </location>
</feature>
<feature type="chain" id="PRO_0000003586" description="Cholesterol side-chain cleavage enzyme, mitochondrial">
    <location>
        <begin position="37"/>
        <end position="520"/>
    </location>
</feature>
<feature type="binding site" description="axial binding residue" evidence="2">
    <location>
        <position position="458"/>
    </location>
    <ligand>
        <name>heme</name>
        <dbReference type="ChEBI" id="CHEBI:30413"/>
    </ligand>
    <ligandPart>
        <name>Fe</name>
        <dbReference type="ChEBI" id="CHEBI:18248"/>
    </ligandPart>
</feature>